<sequence length="168" mass="18711">MKHRVVGRRLDRTTEHRTAMLRNMVTSLLRHERIVTTTPKAKELKRFADKVITLAKRGSAHHRRLANREVKDVEVLNKLFDSIAGRFKARPGGYTRIVRVGRRAGDNADMSVIELVDRAAAEAEGGEEKAEQKTEKKAAKAKEPKAAKAPKKAAAKPKAKAEKKGAEE</sequence>
<name>RL17_ANADF</name>
<protein>
    <recommendedName>
        <fullName evidence="1">Large ribosomal subunit protein bL17</fullName>
    </recommendedName>
    <alternativeName>
        <fullName evidence="3">50S ribosomal protein L17</fullName>
    </alternativeName>
</protein>
<dbReference type="EMBL" id="CP000769">
    <property type="protein sequence ID" value="ABS26142.1"/>
    <property type="molecule type" value="Genomic_DNA"/>
</dbReference>
<dbReference type="RefSeq" id="WP_012096720.1">
    <property type="nucleotide sequence ID" value="NC_009675.1"/>
</dbReference>
<dbReference type="SMR" id="A7HBP6"/>
<dbReference type="STRING" id="404589.Anae109_1939"/>
<dbReference type="KEGG" id="afw:Anae109_1939"/>
<dbReference type="eggNOG" id="COG0203">
    <property type="taxonomic scope" value="Bacteria"/>
</dbReference>
<dbReference type="HOGENOM" id="CLU_074407_0_1_7"/>
<dbReference type="OrthoDB" id="9809073at2"/>
<dbReference type="Proteomes" id="UP000006382">
    <property type="component" value="Chromosome"/>
</dbReference>
<dbReference type="GO" id="GO:0022625">
    <property type="term" value="C:cytosolic large ribosomal subunit"/>
    <property type="evidence" value="ECO:0007669"/>
    <property type="project" value="TreeGrafter"/>
</dbReference>
<dbReference type="GO" id="GO:0003735">
    <property type="term" value="F:structural constituent of ribosome"/>
    <property type="evidence" value="ECO:0007669"/>
    <property type="project" value="InterPro"/>
</dbReference>
<dbReference type="GO" id="GO:0006412">
    <property type="term" value="P:translation"/>
    <property type="evidence" value="ECO:0007669"/>
    <property type="project" value="UniProtKB-UniRule"/>
</dbReference>
<dbReference type="FunFam" id="3.90.1030.10:FF:000001">
    <property type="entry name" value="50S ribosomal protein L17"/>
    <property type="match status" value="1"/>
</dbReference>
<dbReference type="Gene3D" id="3.90.1030.10">
    <property type="entry name" value="Ribosomal protein L17"/>
    <property type="match status" value="1"/>
</dbReference>
<dbReference type="HAMAP" id="MF_01368">
    <property type="entry name" value="Ribosomal_bL17"/>
    <property type="match status" value="1"/>
</dbReference>
<dbReference type="InterPro" id="IPR000456">
    <property type="entry name" value="Ribosomal_bL17"/>
</dbReference>
<dbReference type="InterPro" id="IPR047859">
    <property type="entry name" value="Ribosomal_bL17_CS"/>
</dbReference>
<dbReference type="InterPro" id="IPR036373">
    <property type="entry name" value="Ribosomal_bL17_sf"/>
</dbReference>
<dbReference type="NCBIfam" id="TIGR00059">
    <property type="entry name" value="L17"/>
    <property type="match status" value="1"/>
</dbReference>
<dbReference type="PANTHER" id="PTHR14413:SF16">
    <property type="entry name" value="LARGE RIBOSOMAL SUBUNIT PROTEIN BL17M"/>
    <property type="match status" value="1"/>
</dbReference>
<dbReference type="PANTHER" id="PTHR14413">
    <property type="entry name" value="RIBOSOMAL PROTEIN L17"/>
    <property type="match status" value="1"/>
</dbReference>
<dbReference type="Pfam" id="PF01196">
    <property type="entry name" value="Ribosomal_L17"/>
    <property type="match status" value="1"/>
</dbReference>
<dbReference type="SUPFAM" id="SSF64263">
    <property type="entry name" value="Prokaryotic ribosomal protein L17"/>
    <property type="match status" value="1"/>
</dbReference>
<dbReference type="PROSITE" id="PS01167">
    <property type="entry name" value="RIBOSOMAL_L17"/>
    <property type="match status" value="1"/>
</dbReference>
<organism>
    <name type="scientific">Anaeromyxobacter sp. (strain Fw109-5)</name>
    <dbReference type="NCBI Taxonomy" id="404589"/>
    <lineage>
        <taxon>Bacteria</taxon>
        <taxon>Pseudomonadati</taxon>
        <taxon>Myxococcota</taxon>
        <taxon>Myxococcia</taxon>
        <taxon>Myxococcales</taxon>
        <taxon>Cystobacterineae</taxon>
        <taxon>Anaeromyxobacteraceae</taxon>
        <taxon>Anaeromyxobacter</taxon>
    </lineage>
</organism>
<gene>
    <name evidence="1" type="primary">rplQ</name>
    <name type="ordered locus">Anae109_1939</name>
</gene>
<feature type="chain" id="PRO_1000055762" description="Large ribosomal subunit protein bL17">
    <location>
        <begin position="1"/>
        <end position="168"/>
    </location>
</feature>
<feature type="region of interest" description="Disordered" evidence="2">
    <location>
        <begin position="121"/>
        <end position="168"/>
    </location>
</feature>
<feature type="compositionally biased region" description="Basic and acidic residues" evidence="2">
    <location>
        <begin position="121"/>
        <end position="146"/>
    </location>
</feature>
<feature type="compositionally biased region" description="Basic residues" evidence="2">
    <location>
        <begin position="148"/>
        <end position="158"/>
    </location>
</feature>
<feature type="compositionally biased region" description="Basic and acidic residues" evidence="2">
    <location>
        <begin position="159"/>
        <end position="168"/>
    </location>
</feature>
<comment type="subunit">
    <text evidence="1">Part of the 50S ribosomal subunit. Contacts protein L32.</text>
</comment>
<comment type="similarity">
    <text evidence="1">Belongs to the bacterial ribosomal protein bL17 family.</text>
</comment>
<reference key="1">
    <citation type="journal article" date="2015" name="Genome Announc.">
        <title>Complete genome sequence of Anaeromyxobacter sp. Fw109-5, an anaerobic, metal-reducing bacterium isolated from a contaminated subsurface environment.</title>
        <authorList>
            <person name="Hwang C."/>
            <person name="Copeland A."/>
            <person name="Lucas S."/>
            <person name="Lapidus A."/>
            <person name="Barry K."/>
            <person name="Glavina Del Rio T."/>
            <person name="Dalin E."/>
            <person name="Tice H."/>
            <person name="Pitluck S."/>
            <person name="Sims D."/>
            <person name="Brettin T."/>
            <person name="Bruce D.C."/>
            <person name="Detter J.C."/>
            <person name="Han C.S."/>
            <person name="Schmutz J."/>
            <person name="Larimer F.W."/>
            <person name="Land M.L."/>
            <person name="Hauser L.J."/>
            <person name="Kyrpides N."/>
            <person name="Lykidis A."/>
            <person name="Richardson P."/>
            <person name="Belieav A."/>
            <person name="Sanford R.A."/>
            <person name="Loeffler F.E."/>
            <person name="Fields M.W."/>
        </authorList>
    </citation>
    <scope>NUCLEOTIDE SEQUENCE [LARGE SCALE GENOMIC DNA]</scope>
    <source>
        <strain>Fw109-5</strain>
    </source>
</reference>
<keyword id="KW-1185">Reference proteome</keyword>
<keyword id="KW-0687">Ribonucleoprotein</keyword>
<keyword id="KW-0689">Ribosomal protein</keyword>
<evidence type="ECO:0000255" key="1">
    <source>
        <dbReference type="HAMAP-Rule" id="MF_01368"/>
    </source>
</evidence>
<evidence type="ECO:0000256" key="2">
    <source>
        <dbReference type="SAM" id="MobiDB-lite"/>
    </source>
</evidence>
<evidence type="ECO:0000305" key="3"/>
<accession>A7HBP6</accession>
<proteinExistence type="inferred from homology"/>